<comment type="function">
    <text evidence="1">Catalyzes the NADPH-dependent reduction of glutamyl-tRNA(Glu) to glutamate 1-semialdehyde (GSA).</text>
</comment>
<comment type="catalytic activity">
    <reaction evidence="1">
        <text>(S)-4-amino-5-oxopentanoate + tRNA(Glu) + NADP(+) = L-glutamyl-tRNA(Glu) + NADPH + H(+)</text>
        <dbReference type="Rhea" id="RHEA:12344"/>
        <dbReference type="Rhea" id="RHEA-COMP:9663"/>
        <dbReference type="Rhea" id="RHEA-COMP:9680"/>
        <dbReference type="ChEBI" id="CHEBI:15378"/>
        <dbReference type="ChEBI" id="CHEBI:57501"/>
        <dbReference type="ChEBI" id="CHEBI:57783"/>
        <dbReference type="ChEBI" id="CHEBI:58349"/>
        <dbReference type="ChEBI" id="CHEBI:78442"/>
        <dbReference type="ChEBI" id="CHEBI:78520"/>
        <dbReference type="EC" id="1.2.1.70"/>
    </reaction>
</comment>
<comment type="pathway">
    <text evidence="1">Porphyrin-containing compound metabolism; protoporphyrin-IX biosynthesis; 5-aminolevulinate from L-glutamyl-tRNA(Glu): step 1/2.</text>
</comment>
<comment type="subunit">
    <text evidence="1">Homodimer.</text>
</comment>
<comment type="domain">
    <text evidence="1">Possesses an unusual extended V-shaped dimeric structure with each monomer consisting of three distinct domains arranged along a curved 'spinal' alpha-helix. The N-terminal catalytic domain specifically recognizes the glutamate moiety of the substrate. The second domain is the NADPH-binding domain, and the third C-terminal domain is responsible for dimerization.</text>
</comment>
<comment type="miscellaneous">
    <text evidence="1">During catalysis, the active site Cys acts as a nucleophile attacking the alpha-carbonyl group of tRNA-bound glutamate with the formation of a thioester intermediate between enzyme and glutamate, and the concomitant release of tRNA(Glu). The thioester intermediate is finally reduced by direct hydride transfer from NADPH, to form the product GSA.</text>
</comment>
<comment type="similarity">
    <text evidence="1">Belongs to the glutamyl-tRNA reductase family.</text>
</comment>
<reference key="1">
    <citation type="submission" date="2005-03" db="EMBL/GenBank/DDBJ databases">
        <title>Comparison of the complete genome sequences of Rhodococcus erythropolis PR4 and Rhodococcus opacus B4.</title>
        <authorList>
            <person name="Takarada H."/>
            <person name="Sekine M."/>
            <person name="Hosoyama A."/>
            <person name="Yamada R."/>
            <person name="Fujisawa T."/>
            <person name="Omata S."/>
            <person name="Shimizu A."/>
            <person name="Tsukatani N."/>
            <person name="Tanikawa S."/>
            <person name="Fujita N."/>
            <person name="Harayama S."/>
        </authorList>
    </citation>
    <scope>NUCLEOTIDE SEQUENCE [LARGE SCALE GENOMIC DNA]</scope>
    <source>
        <strain>PR4 / NBRC 100887</strain>
    </source>
</reference>
<sequence>MSVLLVGVSHRTAPVPVLERVAVTDTDRPKLIDKLLASSHISEAMIVSTCNRVEVYAVVDAFHGALTEVGEILADHSGLDLTALHAHAYVRYSEAAVEHLFAVASGLDSMVIGEQQILGQIRSAYASSDAQQAAGRVVHELAQQALRVGKRVHSETGIDSAGASVVSVALDRAAGIIGEGGLVGRTAVVVGAGSMGGLSVAHLTRAGIARIVVVNRTQERAEHLAETARSNGVDADGVAFDQLSAAMAQADVMVTCTGAVGAVVTLADVHRALAEPDRDNTKHLVICDLGLPRDIDPAVAGLPGVTVLDMETLQRDPAAGAAASDADAARTIVAGELATYLAGQRLAEVTPTVTALRQRAADVVEAELMRLDSRLPGLDDPQRDEVARTVRRVVDKLLHAPTVRVKQLASAPGGDSYAAALRELFELSPGSPAAVATPTDLVDGDRTGRDLQA</sequence>
<organism>
    <name type="scientific">Rhodococcus erythropolis (strain PR4 / NBRC 100887)</name>
    <dbReference type="NCBI Taxonomy" id="234621"/>
    <lineage>
        <taxon>Bacteria</taxon>
        <taxon>Bacillati</taxon>
        <taxon>Actinomycetota</taxon>
        <taxon>Actinomycetes</taxon>
        <taxon>Mycobacteriales</taxon>
        <taxon>Nocardiaceae</taxon>
        <taxon>Rhodococcus</taxon>
        <taxon>Rhodococcus erythropolis group</taxon>
    </lineage>
</organism>
<keyword id="KW-0521">NADP</keyword>
<keyword id="KW-0560">Oxidoreductase</keyword>
<keyword id="KW-0627">Porphyrin biosynthesis</keyword>
<accession>C0ZUV4</accession>
<dbReference type="EC" id="1.2.1.70" evidence="1"/>
<dbReference type="EMBL" id="AP008957">
    <property type="protein sequence ID" value="BAH32349.1"/>
    <property type="molecule type" value="Genomic_DNA"/>
</dbReference>
<dbReference type="RefSeq" id="WP_003941867.1">
    <property type="nucleotide sequence ID" value="NC_012490.1"/>
</dbReference>
<dbReference type="SMR" id="C0ZUV4"/>
<dbReference type="KEGG" id="rer:RER_16410"/>
<dbReference type="eggNOG" id="COG0373">
    <property type="taxonomic scope" value="Bacteria"/>
</dbReference>
<dbReference type="HOGENOM" id="CLU_035113_4_0_11"/>
<dbReference type="UniPathway" id="UPA00251">
    <property type="reaction ID" value="UER00316"/>
</dbReference>
<dbReference type="Proteomes" id="UP000002204">
    <property type="component" value="Chromosome"/>
</dbReference>
<dbReference type="GO" id="GO:0008883">
    <property type="term" value="F:glutamyl-tRNA reductase activity"/>
    <property type="evidence" value="ECO:0007669"/>
    <property type="project" value="UniProtKB-UniRule"/>
</dbReference>
<dbReference type="GO" id="GO:0050661">
    <property type="term" value="F:NADP binding"/>
    <property type="evidence" value="ECO:0007669"/>
    <property type="project" value="InterPro"/>
</dbReference>
<dbReference type="GO" id="GO:0019353">
    <property type="term" value="P:protoporphyrinogen IX biosynthetic process from glutamate"/>
    <property type="evidence" value="ECO:0007669"/>
    <property type="project" value="TreeGrafter"/>
</dbReference>
<dbReference type="CDD" id="cd05213">
    <property type="entry name" value="NAD_bind_Glutamyl_tRNA_reduct"/>
    <property type="match status" value="1"/>
</dbReference>
<dbReference type="FunFam" id="3.30.460.30:FF:000001">
    <property type="entry name" value="Glutamyl-tRNA reductase"/>
    <property type="match status" value="1"/>
</dbReference>
<dbReference type="Gene3D" id="3.30.460.30">
    <property type="entry name" value="Glutamyl-tRNA reductase, N-terminal domain"/>
    <property type="match status" value="1"/>
</dbReference>
<dbReference type="Gene3D" id="3.40.50.720">
    <property type="entry name" value="NAD(P)-binding Rossmann-like Domain"/>
    <property type="match status" value="1"/>
</dbReference>
<dbReference type="HAMAP" id="MF_00087">
    <property type="entry name" value="Glu_tRNA_reductase"/>
    <property type="match status" value="1"/>
</dbReference>
<dbReference type="InterPro" id="IPR000343">
    <property type="entry name" value="4pyrrol_synth_GluRdtase"/>
</dbReference>
<dbReference type="InterPro" id="IPR015896">
    <property type="entry name" value="4pyrrol_synth_GluRdtase_dimer"/>
</dbReference>
<dbReference type="InterPro" id="IPR015895">
    <property type="entry name" value="4pyrrol_synth_GluRdtase_N"/>
</dbReference>
<dbReference type="InterPro" id="IPR018214">
    <property type="entry name" value="GluRdtase_CS"/>
</dbReference>
<dbReference type="InterPro" id="IPR036453">
    <property type="entry name" value="GluRdtase_dimer_dom_sf"/>
</dbReference>
<dbReference type="InterPro" id="IPR036343">
    <property type="entry name" value="GluRdtase_N_sf"/>
</dbReference>
<dbReference type="InterPro" id="IPR036291">
    <property type="entry name" value="NAD(P)-bd_dom_sf"/>
</dbReference>
<dbReference type="InterPro" id="IPR006151">
    <property type="entry name" value="Shikm_DH/Glu-tRNA_Rdtase"/>
</dbReference>
<dbReference type="NCBIfam" id="TIGR01035">
    <property type="entry name" value="hemA"/>
    <property type="match status" value="1"/>
</dbReference>
<dbReference type="NCBIfam" id="NF000744">
    <property type="entry name" value="PRK00045.1-3"/>
    <property type="match status" value="1"/>
</dbReference>
<dbReference type="PANTHER" id="PTHR43013">
    <property type="entry name" value="GLUTAMYL-TRNA REDUCTASE"/>
    <property type="match status" value="1"/>
</dbReference>
<dbReference type="PANTHER" id="PTHR43013:SF1">
    <property type="entry name" value="GLUTAMYL-TRNA REDUCTASE"/>
    <property type="match status" value="1"/>
</dbReference>
<dbReference type="Pfam" id="PF00745">
    <property type="entry name" value="GlutR_dimer"/>
    <property type="match status" value="1"/>
</dbReference>
<dbReference type="Pfam" id="PF05201">
    <property type="entry name" value="GlutR_N"/>
    <property type="match status" value="1"/>
</dbReference>
<dbReference type="Pfam" id="PF01488">
    <property type="entry name" value="Shikimate_DH"/>
    <property type="match status" value="1"/>
</dbReference>
<dbReference type="PIRSF" id="PIRSF000445">
    <property type="entry name" value="4pyrrol_synth_GluRdtase"/>
    <property type="match status" value="1"/>
</dbReference>
<dbReference type="SUPFAM" id="SSF69742">
    <property type="entry name" value="Glutamyl tRNA-reductase catalytic, N-terminal domain"/>
    <property type="match status" value="1"/>
</dbReference>
<dbReference type="SUPFAM" id="SSF69075">
    <property type="entry name" value="Glutamyl tRNA-reductase dimerization domain"/>
    <property type="match status" value="1"/>
</dbReference>
<dbReference type="SUPFAM" id="SSF51735">
    <property type="entry name" value="NAD(P)-binding Rossmann-fold domains"/>
    <property type="match status" value="1"/>
</dbReference>
<dbReference type="PROSITE" id="PS00747">
    <property type="entry name" value="GLUTR"/>
    <property type="match status" value="1"/>
</dbReference>
<name>HEM1_RHOE4</name>
<proteinExistence type="inferred from homology"/>
<evidence type="ECO:0000255" key="1">
    <source>
        <dbReference type="HAMAP-Rule" id="MF_00087"/>
    </source>
</evidence>
<evidence type="ECO:0000256" key="2">
    <source>
        <dbReference type="SAM" id="MobiDB-lite"/>
    </source>
</evidence>
<protein>
    <recommendedName>
        <fullName evidence="1">Glutamyl-tRNA reductase</fullName>
        <shortName evidence="1">GluTR</shortName>
        <ecNumber evidence="1">1.2.1.70</ecNumber>
    </recommendedName>
</protein>
<gene>
    <name evidence="1" type="primary">hemA</name>
    <name type="ordered locus">RER_16410</name>
</gene>
<feature type="chain" id="PRO_1000202641" description="Glutamyl-tRNA reductase">
    <location>
        <begin position="1"/>
        <end position="453"/>
    </location>
</feature>
<feature type="region of interest" description="Disordered" evidence="2">
    <location>
        <begin position="432"/>
        <end position="453"/>
    </location>
</feature>
<feature type="compositionally biased region" description="Basic and acidic residues" evidence="2">
    <location>
        <begin position="443"/>
        <end position="453"/>
    </location>
</feature>
<feature type="active site" description="Nucleophile" evidence="1">
    <location>
        <position position="50"/>
    </location>
</feature>
<feature type="binding site" evidence="1">
    <location>
        <begin position="49"/>
        <end position="52"/>
    </location>
    <ligand>
        <name>substrate</name>
    </ligand>
</feature>
<feature type="binding site" evidence="1">
    <location>
        <position position="109"/>
    </location>
    <ligand>
        <name>substrate</name>
    </ligand>
</feature>
<feature type="binding site" evidence="1">
    <location>
        <begin position="114"/>
        <end position="116"/>
    </location>
    <ligand>
        <name>substrate</name>
    </ligand>
</feature>
<feature type="binding site" evidence="1">
    <location>
        <position position="120"/>
    </location>
    <ligand>
        <name>substrate</name>
    </ligand>
</feature>
<feature type="binding site" evidence="1">
    <location>
        <begin position="191"/>
        <end position="196"/>
    </location>
    <ligand>
        <name>NADP(+)</name>
        <dbReference type="ChEBI" id="CHEBI:58349"/>
    </ligand>
</feature>
<feature type="site" description="Important for activity" evidence="1">
    <location>
        <position position="99"/>
    </location>
</feature>